<protein>
    <recommendedName>
        <fullName>Cytochrome b</fullName>
    </recommendedName>
    <alternativeName>
        <fullName>Complex III subunit 3</fullName>
    </alternativeName>
    <alternativeName>
        <fullName>Complex III subunit III</fullName>
    </alternativeName>
    <alternativeName>
        <fullName>Cytochrome b-c1 complex subunit 3</fullName>
    </alternativeName>
    <alternativeName>
        <fullName>Ubiquinol-cytochrome-c reductase complex cytochrome b subunit</fullName>
    </alternativeName>
</protein>
<name>CYB_LEMCA</name>
<geneLocation type="mitochondrion"/>
<keyword id="KW-0249">Electron transport</keyword>
<keyword id="KW-0349">Heme</keyword>
<keyword id="KW-0408">Iron</keyword>
<keyword id="KW-0472">Membrane</keyword>
<keyword id="KW-0479">Metal-binding</keyword>
<keyword id="KW-0496">Mitochondrion</keyword>
<keyword id="KW-0999">Mitochondrion inner membrane</keyword>
<keyword id="KW-0679">Respiratory chain</keyword>
<keyword id="KW-0812">Transmembrane</keyword>
<keyword id="KW-1133">Transmembrane helix</keyword>
<keyword id="KW-0813">Transport</keyword>
<keyword id="KW-0830">Ubiquinone</keyword>
<accession>Q34876</accession>
<accession>Q34875</accession>
<accession>Q34877</accession>
<accession>Q9TEM4</accession>
<accession>Q9TEM6</accession>
<sequence length="379" mass="42784">MTNIRKNHPLMKIMNSSFIDLPTPSNISSWWNFGSLLGACLALQIITGLFLAMHYTADTTTAFSSVTHICRDVNYGWVIRYLHANGASMFFLCLFIHIGRGLYYGSFTLSETWNIGIILLFTVMATAFMGYVLPWGQMSFWGATVITNLLSAIPYIGTNLVEWIWGGFSVDKATLTRFFAFHFILPFIIATLVMVHLLFLHETGSNNPLGTSSDSDKIPFHPYYTIKDLLGLMLLILLTMTLVLFSPDLLGDPDNYSPANPLSTPPHIKPEWYFLFAYAILRSIPNKLGGVLALVFSILILAIIPMLHTAKQRSMVFRPLSQYLFWILTADLFILTWIGGQPVEHPFITIGQMASILYFSLILIMMPVVSLIENKMLKW</sequence>
<gene>
    <name type="primary">MT-CYB</name>
    <name type="synonym">COB</name>
    <name type="synonym">CYTB</name>
    <name type="synonym">MTCYB</name>
</gene>
<reference key="1">
    <citation type="journal article" date="1996" name="Proc. Natl. Acad. Sci. U.S.A.">
        <title>Ancient single origin for Malagasy primates.</title>
        <authorList>
            <person name="Yoder A.D."/>
            <person name="Cartmill M."/>
            <person name="Ruvolo M."/>
            <person name="Smith K."/>
            <person name="Vilgalys R."/>
        </authorList>
    </citation>
    <scope>NUCLEOTIDE SEQUENCE [GENOMIC DNA]</scope>
</reference>
<reference key="2">
    <citation type="journal article" date="1995" name="Nature">
        <title>Insertions and duplications of mtDNA in the nuclear genomes of Old World monkeys and hominoids.</title>
        <authorList>
            <person name="Collura R.V."/>
            <person name="Stewart C.-B.R."/>
        </authorList>
    </citation>
    <scope>NUCLEOTIDE SEQUENCE [GENOMIC DNA]</scope>
    <source>
        <tissue>Blood</tissue>
    </source>
</reference>
<reference key="3">
    <citation type="submission" date="1999-08" db="EMBL/GenBank/DDBJ databases">
        <title>Genetic tests of the taxonomic status of Lemur catta from the high mountain zone of the Andringitra Massif, Madagascar.</title>
        <authorList>
            <person name="Yoder A.D."/>
            <person name="Irwin J.A."/>
            <person name="Goodman S.M."/>
            <person name="Rakotoarisoa S.V."/>
        </authorList>
    </citation>
    <scope>NUCLEOTIDE SEQUENCE [GENOMIC DNA]</scope>
    <source>
        <strain>Isolate DUPC 6271m</strain>
        <strain>Isolate FMNH 85134</strain>
    </source>
</reference>
<reference key="4">
    <citation type="journal article" date="2002" name="Proc. Natl. Acad. Sci. U.S.A.">
        <title>Mammalian mitogenomic relationships and the root of the eutherian tree.</title>
        <authorList>
            <person name="Arnason U."/>
            <person name="Adegoke J.A."/>
            <person name="Bodin K."/>
            <person name="Born E.W."/>
            <person name="Esa Y.B."/>
            <person name="Gullberg A."/>
            <person name="Nilsson M."/>
            <person name="Short R.V."/>
            <person name="Xu X."/>
            <person name="Janke A."/>
        </authorList>
    </citation>
    <scope>NUCLEOTIDE SEQUENCE [GENOMIC DNA]</scope>
</reference>
<reference key="5">
    <citation type="submission" date="1994-07" db="EMBL/GenBank/DDBJ databases">
        <authorList>
            <person name="del Pero M.D."/>
        </authorList>
    </citation>
    <scope>NUCLEOTIDE SEQUENCE [GENOMIC DNA] OF 35-130</scope>
    <source>
        <tissue>Blood</tissue>
    </source>
</reference>
<dbReference type="EMBL" id="U53575">
    <property type="protein sequence ID" value="AAC50526.1"/>
    <property type="molecule type" value="Genomic_DNA"/>
</dbReference>
<dbReference type="EMBL" id="U38271">
    <property type="protein sequence ID" value="AAA98461.1"/>
    <property type="molecule type" value="Genomic_DNA"/>
</dbReference>
<dbReference type="EMBL" id="AF175958">
    <property type="protein sequence ID" value="AAD51115.1"/>
    <property type="molecule type" value="Genomic_DNA"/>
</dbReference>
<dbReference type="EMBL" id="AF175960">
    <property type="protein sequence ID" value="AAD51117.1"/>
    <property type="molecule type" value="Genomic_DNA"/>
</dbReference>
<dbReference type="EMBL" id="AJ421451">
    <property type="protein sequence ID" value="CAD13433.1"/>
    <property type="molecule type" value="Genomic_DNA"/>
</dbReference>
<dbReference type="EMBL" id="Z34980">
    <property type="protein sequence ID" value="CAA84432.1"/>
    <property type="molecule type" value="Genomic_DNA"/>
</dbReference>
<dbReference type="RefSeq" id="NP_659300.1">
    <property type="nucleotide sequence ID" value="NC_004025.1"/>
</dbReference>
<dbReference type="SMR" id="Q34876"/>
<dbReference type="GO" id="GO:0005743">
    <property type="term" value="C:mitochondrial inner membrane"/>
    <property type="evidence" value="ECO:0007669"/>
    <property type="project" value="UniProtKB-SubCell"/>
</dbReference>
<dbReference type="GO" id="GO:0045275">
    <property type="term" value="C:respiratory chain complex III"/>
    <property type="evidence" value="ECO:0007669"/>
    <property type="project" value="InterPro"/>
</dbReference>
<dbReference type="GO" id="GO:0046872">
    <property type="term" value="F:metal ion binding"/>
    <property type="evidence" value="ECO:0007669"/>
    <property type="project" value="UniProtKB-KW"/>
</dbReference>
<dbReference type="GO" id="GO:0008121">
    <property type="term" value="F:ubiquinol-cytochrome-c reductase activity"/>
    <property type="evidence" value="ECO:0007669"/>
    <property type="project" value="InterPro"/>
</dbReference>
<dbReference type="GO" id="GO:0006122">
    <property type="term" value="P:mitochondrial electron transport, ubiquinol to cytochrome c"/>
    <property type="evidence" value="ECO:0007669"/>
    <property type="project" value="TreeGrafter"/>
</dbReference>
<dbReference type="CDD" id="cd00290">
    <property type="entry name" value="cytochrome_b_C"/>
    <property type="match status" value="1"/>
</dbReference>
<dbReference type="CDD" id="cd00284">
    <property type="entry name" value="Cytochrome_b_N"/>
    <property type="match status" value="1"/>
</dbReference>
<dbReference type="FunFam" id="1.20.810.10:FF:000002">
    <property type="entry name" value="Cytochrome b"/>
    <property type="match status" value="1"/>
</dbReference>
<dbReference type="Gene3D" id="1.20.810.10">
    <property type="entry name" value="Cytochrome Bc1 Complex, Chain C"/>
    <property type="match status" value="1"/>
</dbReference>
<dbReference type="InterPro" id="IPR005798">
    <property type="entry name" value="Cyt_b/b6_C"/>
</dbReference>
<dbReference type="InterPro" id="IPR036150">
    <property type="entry name" value="Cyt_b/b6_C_sf"/>
</dbReference>
<dbReference type="InterPro" id="IPR005797">
    <property type="entry name" value="Cyt_b/b6_N"/>
</dbReference>
<dbReference type="InterPro" id="IPR027387">
    <property type="entry name" value="Cytb/b6-like_sf"/>
</dbReference>
<dbReference type="InterPro" id="IPR030689">
    <property type="entry name" value="Cytochrome_b"/>
</dbReference>
<dbReference type="InterPro" id="IPR048260">
    <property type="entry name" value="Cytochrome_b_C_euk/bac"/>
</dbReference>
<dbReference type="InterPro" id="IPR048259">
    <property type="entry name" value="Cytochrome_b_N_euk/bac"/>
</dbReference>
<dbReference type="InterPro" id="IPR016174">
    <property type="entry name" value="Di-haem_cyt_TM"/>
</dbReference>
<dbReference type="PANTHER" id="PTHR19271">
    <property type="entry name" value="CYTOCHROME B"/>
    <property type="match status" value="1"/>
</dbReference>
<dbReference type="PANTHER" id="PTHR19271:SF16">
    <property type="entry name" value="CYTOCHROME B"/>
    <property type="match status" value="1"/>
</dbReference>
<dbReference type="Pfam" id="PF00032">
    <property type="entry name" value="Cytochrom_B_C"/>
    <property type="match status" value="1"/>
</dbReference>
<dbReference type="Pfam" id="PF00033">
    <property type="entry name" value="Cytochrome_B"/>
    <property type="match status" value="1"/>
</dbReference>
<dbReference type="PIRSF" id="PIRSF038885">
    <property type="entry name" value="COB"/>
    <property type="match status" value="1"/>
</dbReference>
<dbReference type="SUPFAM" id="SSF81648">
    <property type="entry name" value="a domain/subunit of cytochrome bc1 complex (Ubiquinol-cytochrome c reductase)"/>
    <property type="match status" value="1"/>
</dbReference>
<dbReference type="SUPFAM" id="SSF81342">
    <property type="entry name" value="Transmembrane di-heme cytochromes"/>
    <property type="match status" value="1"/>
</dbReference>
<dbReference type="PROSITE" id="PS51003">
    <property type="entry name" value="CYTB_CTER"/>
    <property type="match status" value="1"/>
</dbReference>
<dbReference type="PROSITE" id="PS51002">
    <property type="entry name" value="CYTB_NTER"/>
    <property type="match status" value="1"/>
</dbReference>
<feature type="chain" id="PRO_0000061095" description="Cytochrome b">
    <location>
        <begin position="1"/>
        <end position="379"/>
    </location>
</feature>
<feature type="transmembrane region" description="Helical" evidence="2">
    <location>
        <begin position="33"/>
        <end position="53"/>
    </location>
</feature>
<feature type="transmembrane region" description="Helical" evidence="2">
    <location>
        <begin position="77"/>
        <end position="98"/>
    </location>
</feature>
<feature type="transmembrane region" description="Helical" evidence="2">
    <location>
        <begin position="113"/>
        <end position="133"/>
    </location>
</feature>
<feature type="transmembrane region" description="Helical" evidence="2">
    <location>
        <begin position="178"/>
        <end position="198"/>
    </location>
</feature>
<feature type="transmembrane region" description="Helical" evidence="2">
    <location>
        <begin position="226"/>
        <end position="246"/>
    </location>
</feature>
<feature type="transmembrane region" description="Helical" evidence="2">
    <location>
        <begin position="288"/>
        <end position="308"/>
    </location>
</feature>
<feature type="transmembrane region" description="Helical" evidence="2">
    <location>
        <begin position="320"/>
        <end position="340"/>
    </location>
</feature>
<feature type="transmembrane region" description="Helical" evidence="2">
    <location>
        <begin position="347"/>
        <end position="367"/>
    </location>
</feature>
<feature type="binding site" description="axial binding residue" evidence="2">
    <location>
        <position position="83"/>
    </location>
    <ligand>
        <name>heme b</name>
        <dbReference type="ChEBI" id="CHEBI:60344"/>
        <label>b562</label>
    </ligand>
    <ligandPart>
        <name>Fe</name>
        <dbReference type="ChEBI" id="CHEBI:18248"/>
    </ligandPart>
</feature>
<feature type="binding site" description="axial binding residue" evidence="2">
    <location>
        <position position="97"/>
    </location>
    <ligand>
        <name>heme b</name>
        <dbReference type="ChEBI" id="CHEBI:60344"/>
        <label>b566</label>
    </ligand>
    <ligandPart>
        <name>Fe</name>
        <dbReference type="ChEBI" id="CHEBI:18248"/>
    </ligandPart>
</feature>
<feature type="binding site" description="axial binding residue" evidence="2">
    <location>
        <position position="182"/>
    </location>
    <ligand>
        <name>heme b</name>
        <dbReference type="ChEBI" id="CHEBI:60344"/>
        <label>b562</label>
    </ligand>
    <ligandPart>
        <name>Fe</name>
        <dbReference type="ChEBI" id="CHEBI:18248"/>
    </ligandPart>
</feature>
<feature type="binding site" description="axial binding residue" evidence="2">
    <location>
        <position position="196"/>
    </location>
    <ligand>
        <name>heme b</name>
        <dbReference type="ChEBI" id="CHEBI:60344"/>
        <label>b566</label>
    </ligand>
    <ligandPart>
        <name>Fe</name>
        <dbReference type="ChEBI" id="CHEBI:18248"/>
    </ligandPart>
</feature>
<feature type="binding site" evidence="2">
    <location>
        <position position="201"/>
    </location>
    <ligand>
        <name>a ubiquinone</name>
        <dbReference type="ChEBI" id="CHEBI:16389"/>
    </ligand>
</feature>
<feature type="sequence variant" description="In strain: Isolate DUPC 6271m and Isolate FMNH 85134.">
    <original>T</original>
    <variation>A</variation>
    <location>
        <position position="191"/>
    </location>
</feature>
<feature type="sequence variant" description="In strain: Isolate DUPC 6271m and Isolate FMNH 85134.">
    <original>S</original>
    <variation>T</variation>
    <location>
        <position position="257"/>
    </location>
</feature>
<feature type="sequence variant" description="In strain: Isolate FMNH 85134.">
    <original>V</original>
    <variation>M</variation>
    <location>
        <position position="295"/>
    </location>
</feature>
<comment type="function">
    <text evidence="2">Component of the ubiquinol-cytochrome c reductase complex (complex III or cytochrome b-c1 complex) that is part of the mitochondrial respiratory chain. The b-c1 complex mediates electron transfer from ubiquinol to cytochrome c. Contributes to the generation of a proton gradient across the mitochondrial membrane that is then used for ATP synthesis.</text>
</comment>
<comment type="cofactor">
    <cofactor evidence="2">
        <name>heme b</name>
        <dbReference type="ChEBI" id="CHEBI:60344"/>
    </cofactor>
    <text evidence="2">Binds 2 heme b groups non-covalently.</text>
</comment>
<comment type="subunit">
    <text evidence="2">The cytochrome bc1 complex contains 11 subunits: 3 respiratory subunits (MT-CYB, CYC1 and UQCRFS1), 2 core proteins (UQCRC1 and UQCRC2) and 6 low-molecular weight proteins (UQCRH/QCR6, UQCRB/QCR7, UQCRQ/QCR8, UQCR10/QCR9, UQCR11/QCR10 and a cleavage product of UQCRFS1). This cytochrome bc1 complex then forms a dimer.</text>
</comment>
<comment type="subcellular location">
    <subcellularLocation>
        <location evidence="2">Mitochondrion inner membrane</location>
        <topology evidence="2">Multi-pass membrane protein</topology>
    </subcellularLocation>
</comment>
<comment type="miscellaneous">
    <text evidence="1">Heme 1 (or BL or b562) is low-potential and absorbs at about 562 nm, and heme 2 (or BH or b566) is high-potential and absorbs at about 566 nm.</text>
</comment>
<comment type="similarity">
    <text evidence="3 4">Belongs to the cytochrome b family.</text>
</comment>
<comment type="caution">
    <text evidence="2">The full-length protein contains only eight transmembrane helices, not nine as predicted by bioinformatics tools.</text>
</comment>
<evidence type="ECO:0000250" key="1"/>
<evidence type="ECO:0000250" key="2">
    <source>
        <dbReference type="UniProtKB" id="P00157"/>
    </source>
</evidence>
<evidence type="ECO:0000255" key="3">
    <source>
        <dbReference type="PROSITE-ProRule" id="PRU00967"/>
    </source>
</evidence>
<evidence type="ECO:0000255" key="4">
    <source>
        <dbReference type="PROSITE-ProRule" id="PRU00968"/>
    </source>
</evidence>
<proteinExistence type="inferred from homology"/>
<organism>
    <name type="scientific">Lemur catta</name>
    <name type="common">Ring-tailed lemur</name>
    <dbReference type="NCBI Taxonomy" id="9447"/>
    <lineage>
        <taxon>Eukaryota</taxon>
        <taxon>Metazoa</taxon>
        <taxon>Chordata</taxon>
        <taxon>Craniata</taxon>
        <taxon>Vertebrata</taxon>
        <taxon>Euteleostomi</taxon>
        <taxon>Mammalia</taxon>
        <taxon>Eutheria</taxon>
        <taxon>Euarchontoglires</taxon>
        <taxon>Primates</taxon>
        <taxon>Strepsirrhini</taxon>
        <taxon>Lemuriformes</taxon>
        <taxon>Lemuridae</taxon>
        <taxon>Lemur</taxon>
    </lineage>
</organism>